<comment type="subunit">
    <text evidence="1">Part of the 50S ribosomal subunit.</text>
</comment>
<comment type="similarity">
    <text evidence="1">Belongs to the universal ribosomal protein uL30 family.</text>
</comment>
<organism>
    <name type="scientific">Renibacterium salmoninarum (strain ATCC 33209 / DSM 20767 / JCM 11484 / NBRC 15589 / NCIMB 2235)</name>
    <dbReference type="NCBI Taxonomy" id="288705"/>
    <lineage>
        <taxon>Bacteria</taxon>
        <taxon>Bacillati</taxon>
        <taxon>Actinomycetota</taxon>
        <taxon>Actinomycetes</taxon>
        <taxon>Micrococcales</taxon>
        <taxon>Micrococcaceae</taxon>
        <taxon>Renibacterium</taxon>
    </lineage>
</organism>
<dbReference type="EMBL" id="CP000910">
    <property type="protein sequence ID" value="ABY23878.1"/>
    <property type="molecule type" value="Genomic_DNA"/>
</dbReference>
<dbReference type="RefSeq" id="WP_012245544.1">
    <property type="nucleotide sequence ID" value="NC_010168.1"/>
</dbReference>
<dbReference type="SMR" id="A9WSU0"/>
<dbReference type="STRING" id="288705.RSal33209_2146"/>
<dbReference type="KEGG" id="rsa:RSal33209_2146"/>
<dbReference type="eggNOG" id="COG1841">
    <property type="taxonomic scope" value="Bacteria"/>
</dbReference>
<dbReference type="HOGENOM" id="CLU_131047_2_0_11"/>
<dbReference type="Proteomes" id="UP000002007">
    <property type="component" value="Chromosome"/>
</dbReference>
<dbReference type="GO" id="GO:0022625">
    <property type="term" value="C:cytosolic large ribosomal subunit"/>
    <property type="evidence" value="ECO:0007669"/>
    <property type="project" value="TreeGrafter"/>
</dbReference>
<dbReference type="GO" id="GO:0003735">
    <property type="term" value="F:structural constituent of ribosome"/>
    <property type="evidence" value="ECO:0007669"/>
    <property type="project" value="InterPro"/>
</dbReference>
<dbReference type="GO" id="GO:0006412">
    <property type="term" value="P:translation"/>
    <property type="evidence" value="ECO:0007669"/>
    <property type="project" value="UniProtKB-UniRule"/>
</dbReference>
<dbReference type="CDD" id="cd01658">
    <property type="entry name" value="Ribosomal_L30"/>
    <property type="match status" value="1"/>
</dbReference>
<dbReference type="Gene3D" id="3.30.1390.20">
    <property type="entry name" value="Ribosomal protein L30, ferredoxin-like fold domain"/>
    <property type="match status" value="1"/>
</dbReference>
<dbReference type="HAMAP" id="MF_01371_B">
    <property type="entry name" value="Ribosomal_uL30_B"/>
    <property type="match status" value="1"/>
</dbReference>
<dbReference type="InterPro" id="IPR036919">
    <property type="entry name" value="Ribo_uL30_ferredoxin-like_sf"/>
</dbReference>
<dbReference type="InterPro" id="IPR005996">
    <property type="entry name" value="Ribosomal_uL30_bac-type"/>
</dbReference>
<dbReference type="InterPro" id="IPR018038">
    <property type="entry name" value="Ribosomal_uL30_CS"/>
</dbReference>
<dbReference type="InterPro" id="IPR016082">
    <property type="entry name" value="Ribosomal_uL30_ferredoxin-like"/>
</dbReference>
<dbReference type="NCBIfam" id="TIGR01308">
    <property type="entry name" value="rpmD_bact"/>
    <property type="match status" value="1"/>
</dbReference>
<dbReference type="PANTHER" id="PTHR15892:SF2">
    <property type="entry name" value="LARGE RIBOSOMAL SUBUNIT PROTEIN UL30M"/>
    <property type="match status" value="1"/>
</dbReference>
<dbReference type="PANTHER" id="PTHR15892">
    <property type="entry name" value="MITOCHONDRIAL RIBOSOMAL PROTEIN L30"/>
    <property type="match status" value="1"/>
</dbReference>
<dbReference type="Pfam" id="PF00327">
    <property type="entry name" value="Ribosomal_L30"/>
    <property type="match status" value="1"/>
</dbReference>
<dbReference type="PIRSF" id="PIRSF002211">
    <property type="entry name" value="Ribosomal_L30_bac-type"/>
    <property type="match status" value="1"/>
</dbReference>
<dbReference type="SUPFAM" id="SSF55129">
    <property type="entry name" value="Ribosomal protein L30p/L7e"/>
    <property type="match status" value="1"/>
</dbReference>
<dbReference type="PROSITE" id="PS00634">
    <property type="entry name" value="RIBOSOMAL_L30"/>
    <property type="match status" value="1"/>
</dbReference>
<name>RL30_RENSM</name>
<keyword id="KW-1185">Reference proteome</keyword>
<keyword id="KW-0687">Ribonucleoprotein</keyword>
<keyword id="KW-0689">Ribosomal protein</keyword>
<evidence type="ECO:0000255" key="1">
    <source>
        <dbReference type="HAMAP-Rule" id="MF_01371"/>
    </source>
</evidence>
<evidence type="ECO:0000305" key="2"/>
<protein>
    <recommendedName>
        <fullName evidence="1">Large ribosomal subunit protein uL30</fullName>
    </recommendedName>
    <alternativeName>
        <fullName evidence="2">50S ribosomal protein L30</fullName>
    </alternativeName>
</protein>
<proteinExistence type="inferred from homology"/>
<accession>A9WSU0</accession>
<reference key="1">
    <citation type="journal article" date="2008" name="J. Bacteriol.">
        <title>Genome sequence of the fish pathogen Renibacterium salmoninarum suggests reductive evolution away from an environmental Arthrobacter ancestor.</title>
        <authorList>
            <person name="Wiens G.D."/>
            <person name="Rockey D.D."/>
            <person name="Wu Z."/>
            <person name="Chang J."/>
            <person name="Levy R."/>
            <person name="Crane S."/>
            <person name="Chen D.S."/>
            <person name="Capri G.R."/>
            <person name="Burnett J.R."/>
            <person name="Sudheesh P.S."/>
            <person name="Schipma M.J."/>
            <person name="Burd H."/>
            <person name="Bhattacharyya A."/>
            <person name="Rhodes L.D."/>
            <person name="Kaul R."/>
            <person name="Strom M.S."/>
        </authorList>
    </citation>
    <scope>NUCLEOTIDE SEQUENCE [LARGE SCALE GENOMIC DNA]</scope>
    <source>
        <strain>ATCC 33209 / DSM 20767 / JCM 11484 / NBRC 15589 / NCIMB 2235</strain>
    </source>
</reference>
<sequence>MTTPKNVQVSEKTLEITQIKSTIGGKQNQRDTLRSLGLKRIGHTVVRKADAVTVGMINTIPHLVKVEEAK</sequence>
<feature type="chain" id="PRO_0000347133" description="Large ribosomal subunit protein uL30">
    <location>
        <begin position="1"/>
        <end position="70"/>
    </location>
</feature>
<gene>
    <name evidence="1" type="primary">rpmD</name>
    <name type="ordered locus">RSal33209_2146</name>
</gene>